<sequence length="343" mass="36935">MPLDGVKNIVLVLSGKGGVGKSSVTLQLALTFCLQGRSVGILDVDLTGPSIPRLVGLEDAKITQAPGGWLPVTVHPFHTPSSDGLNGSQRANKPDDSNESSSSTVETAPQSTNFCGSLRCMSLGFLLRDRGDAVIWRGPKKTAMIRQFLTDVLWGETDYLLIDTPPGTSDEHIALAEQLLTIQQTYSLRSSRATAPKLAGAVLVTTPQAISTSDVRKEINFCVKTRIPVLGVIENMSGYTCPCCGEVSNVFSRGGGQIMAQETGVRFLGAVPIDVGFGEMVEGWKKDSTGQDQGNKATKKGQDARLDSYDDLLVERYKKCWSFSVFEEFAKKLIGLIEGSDQQ</sequence>
<proteinExistence type="inferred from homology"/>
<protein>
    <recommendedName>
        <fullName evidence="1">Cytosolic Fe-S cluster assembly factor CFD1</fullName>
    </recommendedName>
    <alternativeName>
        <fullName evidence="1">Cytosolic Fe-S cluster-deficient protein 1</fullName>
    </alternativeName>
</protein>
<keyword id="KW-0004">4Fe-4S</keyword>
<keyword id="KW-0067">ATP-binding</keyword>
<keyword id="KW-0963">Cytoplasm</keyword>
<keyword id="KW-0408">Iron</keyword>
<keyword id="KW-0411">Iron-sulfur</keyword>
<keyword id="KW-0479">Metal-binding</keyword>
<keyword id="KW-0547">Nucleotide-binding</keyword>
<keyword id="KW-1185">Reference proteome</keyword>
<dbReference type="EMBL" id="GG704912">
    <property type="protein sequence ID" value="EAS31098.3"/>
    <property type="molecule type" value="Genomic_DNA"/>
</dbReference>
<dbReference type="RefSeq" id="XP_001242681.1">
    <property type="nucleotide sequence ID" value="XM_001242680.2"/>
</dbReference>
<dbReference type="SMR" id="Q1DSY6"/>
<dbReference type="FunCoup" id="Q1DSY6">
    <property type="interactions" value="145"/>
</dbReference>
<dbReference type="STRING" id="246410.Q1DSY6"/>
<dbReference type="GeneID" id="4560891"/>
<dbReference type="KEGG" id="cim:CIMG_06577"/>
<dbReference type="VEuPathDB" id="FungiDB:CIMG_06577"/>
<dbReference type="InParanoid" id="Q1DSY6"/>
<dbReference type="OMA" id="WIPVFAD"/>
<dbReference type="OrthoDB" id="3900342at2759"/>
<dbReference type="Proteomes" id="UP000001261">
    <property type="component" value="Unassembled WGS sequence"/>
</dbReference>
<dbReference type="GO" id="GO:0005829">
    <property type="term" value="C:cytosol"/>
    <property type="evidence" value="ECO:0007669"/>
    <property type="project" value="TreeGrafter"/>
</dbReference>
<dbReference type="GO" id="GO:0051539">
    <property type="term" value="F:4 iron, 4 sulfur cluster binding"/>
    <property type="evidence" value="ECO:0007669"/>
    <property type="project" value="UniProtKB-UniRule"/>
</dbReference>
<dbReference type="GO" id="GO:0005524">
    <property type="term" value="F:ATP binding"/>
    <property type="evidence" value="ECO:0007669"/>
    <property type="project" value="UniProtKB-KW"/>
</dbReference>
<dbReference type="GO" id="GO:0140663">
    <property type="term" value="F:ATP-dependent FeS chaperone activity"/>
    <property type="evidence" value="ECO:0007669"/>
    <property type="project" value="InterPro"/>
</dbReference>
<dbReference type="GO" id="GO:0046872">
    <property type="term" value="F:metal ion binding"/>
    <property type="evidence" value="ECO:0007669"/>
    <property type="project" value="UniProtKB-KW"/>
</dbReference>
<dbReference type="GO" id="GO:0016226">
    <property type="term" value="P:iron-sulfur cluster assembly"/>
    <property type="evidence" value="ECO:0007669"/>
    <property type="project" value="UniProtKB-UniRule"/>
</dbReference>
<dbReference type="CDD" id="cd02037">
    <property type="entry name" value="Mrp_NBP35"/>
    <property type="match status" value="1"/>
</dbReference>
<dbReference type="Gene3D" id="3.40.50.300">
    <property type="entry name" value="P-loop containing nucleotide triphosphate hydrolases"/>
    <property type="match status" value="1"/>
</dbReference>
<dbReference type="HAMAP" id="MF_02040">
    <property type="entry name" value="Mrp_NBP35"/>
    <property type="match status" value="1"/>
</dbReference>
<dbReference type="HAMAP" id="MF_03039">
    <property type="entry name" value="NUBP2"/>
    <property type="match status" value="1"/>
</dbReference>
<dbReference type="InterPro" id="IPR019591">
    <property type="entry name" value="Mrp/NBP35_ATP-bd"/>
</dbReference>
<dbReference type="InterPro" id="IPR028600">
    <property type="entry name" value="NUBP2/Cfd1_eukaryotes"/>
</dbReference>
<dbReference type="InterPro" id="IPR027417">
    <property type="entry name" value="P-loop_NTPase"/>
</dbReference>
<dbReference type="InterPro" id="IPR033756">
    <property type="entry name" value="YlxH/NBP35"/>
</dbReference>
<dbReference type="PANTHER" id="PTHR23264:SF19">
    <property type="entry name" value="CYTOSOLIC FE-S CLUSTER ASSEMBLY FACTOR NUBP2"/>
    <property type="match status" value="1"/>
</dbReference>
<dbReference type="PANTHER" id="PTHR23264">
    <property type="entry name" value="NUCLEOTIDE-BINDING PROTEIN NBP35 YEAST -RELATED"/>
    <property type="match status" value="1"/>
</dbReference>
<dbReference type="Pfam" id="PF10609">
    <property type="entry name" value="ParA"/>
    <property type="match status" value="2"/>
</dbReference>
<dbReference type="SUPFAM" id="SSF52540">
    <property type="entry name" value="P-loop containing nucleoside triphosphate hydrolases"/>
    <property type="match status" value="1"/>
</dbReference>
<gene>
    <name evidence="1" type="primary">CFD1</name>
    <name type="ORF">CIMG_06577</name>
</gene>
<comment type="function">
    <text evidence="1">Component of the cytosolic iron-sulfur (Fe/S) protein assembly (CIA) machinery. Required for maturation of extramitochondrial Fe-S proteins. The NBP35-CFD1 heterotetramer forms a Fe-S scaffold complex, mediating the de novo assembly of an Fe-S cluster and its transfer to target apoproteins.</text>
</comment>
<comment type="cofactor">
    <cofactor evidence="1">
        <name>[4Fe-4S] cluster</name>
        <dbReference type="ChEBI" id="CHEBI:49883"/>
    </cofactor>
    <text evidence="1">Binds 4 [4Fe-4S] clusters per heterotetramer. Contains two stable clusters in the N-termini of NBP35 and two labile, bridging clusters between subunits of the NBP35-CFD1 heterotetramer.</text>
</comment>
<comment type="subunit">
    <text evidence="1">Heterotetramer of 2 NBP35 and 2 CFD1 chains.</text>
</comment>
<comment type="subcellular location">
    <subcellularLocation>
        <location evidence="1">Cytoplasm</location>
    </subcellularLocation>
</comment>
<comment type="similarity">
    <text evidence="1">Belongs to the Mrp/NBP35 ATP-binding proteins family. NUBP2/CFD1 subfamily.</text>
</comment>
<evidence type="ECO:0000255" key="1">
    <source>
        <dbReference type="HAMAP-Rule" id="MF_03039"/>
    </source>
</evidence>
<evidence type="ECO:0000256" key="2">
    <source>
        <dbReference type="SAM" id="MobiDB-lite"/>
    </source>
</evidence>
<organism>
    <name type="scientific">Coccidioides immitis (strain RS)</name>
    <name type="common">Valley fever fungus</name>
    <dbReference type="NCBI Taxonomy" id="246410"/>
    <lineage>
        <taxon>Eukaryota</taxon>
        <taxon>Fungi</taxon>
        <taxon>Dikarya</taxon>
        <taxon>Ascomycota</taxon>
        <taxon>Pezizomycotina</taxon>
        <taxon>Eurotiomycetes</taxon>
        <taxon>Eurotiomycetidae</taxon>
        <taxon>Onygenales</taxon>
        <taxon>Onygenaceae</taxon>
        <taxon>Coccidioides</taxon>
    </lineage>
</organism>
<name>CFD1_COCIM</name>
<feature type="chain" id="PRO_0000278876" description="Cytosolic Fe-S cluster assembly factor CFD1">
    <location>
        <begin position="1"/>
        <end position="343"/>
    </location>
</feature>
<feature type="region of interest" description="Disordered" evidence="2">
    <location>
        <begin position="80"/>
        <end position="110"/>
    </location>
</feature>
<feature type="compositionally biased region" description="Polar residues" evidence="2">
    <location>
        <begin position="80"/>
        <end position="91"/>
    </location>
</feature>
<feature type="compositionally biased region" description="Polar residues" evidence="2">
    <location>
        <begin position="99"/>
        <end position="110"/>
    </location>
</feature>
<feature type="binding site" evidence="1">
    <location>
        <begin position="15"/>
        <end position="22"/>
    </location>
    <ligand>
        <name>ATP</name>
        <dbReference type="ChEBI" id="CHEBI:30616"/>
    </ligand>
</feature>
<feature type="binding site" evidence="1">
    <location>
        <position position="241"/>
    </location>
    <ligand>
        <name>[4Fe-4S] cluster</name>
        <dbReference type="ChEBI" id="CHEBI:49883"/>
        <note>ligand shared between dimeric partners</note>
    </ligand>
</feature>
<feature type="binding site" evidence="1">
    <location>
        <position position="244"/>
    </location>
    <ligand>
        <name>[4Fe-4S] cluster</name>
        <dbReference type="ChEBI" id="CHEBI:49883"/>
        <note>ligand shared between dimeric partners</note>
    </ligand>
</feature>
<accession>Q1DSY6</accession>
<accession>J3K938</accession>
<reference key="1">
    <citation type="journal article" date="2009" name="Genome Res.">
        <title>Comparative genomic analyses of the human fungal pathogens Coccidioides and their relatives.</title>
        <authorList>
            <person name="Sharpton T.J."/>
            <person name="Stajich J.E."/>
            <person name="Rounsley S.D."/>
            <person name="Gardner M.J."/>
            <person name="Wortman J.R."/>
            <person name="Jordar V.S."/>
            <person name="Maiti R."/>
            <person name="Kodira C.D."/>
            <person name="Neafsey D.E."/>
            <person name="Zeng Q."/>
            <person name="Hung C.-Y."/>
            <person name="McMahan C."/>
            <person name="Muszewska A."/>
            <person name="Grynberg M."/>
            <person name="Mandel M.A."/>
            <person name="Kellner E.M."/>
            <person name="Barker B.M."/>
            <person name="Galgiani J.N."/>
            <person name="Orbach M.J."/>
            <person name="Kirkland T.N."/>
            <person name="Cole G.T."/>
            <person name="Henn M.R."/>
            <person name="Birren B.W."/>
            <person name="Taylor J.W."/>
        </authorList>
    </citation>
    <scope>NUCLEOTIDE SEQUENCE [LARGE SCALE GENOMIC DNA]</scope>
    <source>
        <strain>RS</strain>
    </source>
</reference>
<reference key="2">
    <citation type="journal article" date="2010" name="Genome Res.">
        <title>Population genomic sequencing of Coccidioides fungi reveals recent hybridization and transposon control.</title>
        <authorList>
            <person name="Neafsey D.E."/>
            <person name="Barker B.M."/>
            <person name="Sharpton T.J."/>
            <person name="Stajich J.E."/>
            <person name="Park D.J."/>
            <person name="Whiston E."/>
            <person name="Hung C.-Y."/>
            <person name="McMahan C."/>
            <person name="White J."/>
            <person name="Sykes S."/>
            <person name="Heiman D."/>
            <person name="Young S."/>
            <person name="Zeng Q."/>
            <person name="Abouelleil A."/>
            <person name="Aftuck L."/>
            <person name="Bessette D."/>
            <person name="Brown A."/>
            <person name="FitzGerald M."/>
            <person name="Lui A."/>
            <person name="Macdonald J.P."/>
            <person name="Priest M."/>
            <person name="Orbach M.J."/>
            <person name="Galgiani J.N."/>
            <person name="Kirkland T.N."/>
            <person name="Cole G.T."/>
            <person name="Birren B.W."/>
            <person name="Henn M.R."/>
            <person name="Taylor J.W."/>
            <person name="Rounsley S.D."/>
        </authorList>
    </citation>
    <scope>GENOME REANNOTATION</scope>
    <source>
        <strain>RS</strain>
    </source>
</reference>